<protein>
    <recommendedName>
        <fullName evidence="1">Ribosome maturation factor RimM</fullName>
    </recommendedName>
</protein>
<accession>Q3JQ07</accession>
<organism>
    <name type="scientific">Burkholderia pseudomallei (strain 1710b)</name>
    <dbReference type="NCBI Taxonomy" id="320372"/>
    <lineage>
        <taxon>Bacteria</taxon>
        <taxon>Pseudomonadati</taxon>
        <taxon>Pseudomonadota</taxon>
        <taxon>Betaproteobacteria</taxon>
        <taxon>Burkholderiales</taxon>
        <taxon>Burkholderiaceae</taxon>
        <taxon>Burkholderia</taxon>
        <taxon>pseudomallei group</taxon>
    </lineage>
</organism>
<evidence type="ECO:0000255" key="1">
    <source>
        <dbReference type="HAMAP-Rule" id="MF_00014"/>
    </source>
</evidence>
<reference key="1">
    <citation type="journal article" date="2010" name="Genome Biol. Evol.">
        <title>Continuing evolution of Burkholderia mallei through genome reduction and large-scale rearrangements.</title>
        <authorList>
            <person name="Losada L."/>
            <person name="Ronning C.M."/>
            <person name="DeShazer D."/>
            <person name="Woods D."/>
            <person name="Fedorova N."/>
            <person name="Kim H.S."/>
            <person name="Shabalina S.A."/>
            <person name="Pearson T.R."/>
            <person name="Brinkac L."/>
            <person name="Tan P."/>
            <person name="Nandi T."/>
            <person name="Crabtree J."/>
            <person name="Badger J."/>
            <person name="Beckstrom-Sternberg S."/>
            <person name="Saqib M."/>
            <person name="Schutzer S.E."/>
            <person name="Keim P."/>
            <person name="Nierman W.C."/>
        </authorList>
    </citation>
    <scope>NUCLEOTIDE SEQUENCE [LARGE SCALE GENOMIC DNA]</scope>
    <source>
        <strain>1710b</strain>
    </source>
</reference>
<sequence>MAGHDSGNAKRGRSPSFGVFVRKPVERASAKGTSDGAVDSQAIRIDAAQSWPDDAVEVGAVVDAYGLKGWVKLAAHAGAGRGGDALLKARDWWLQKGAERKFARVTQAKLHGDTVVAHPDGSVDRDTALALRGARVFVRRGDFPALAADEFYWVDLIGLDVVNEAGVALGKIADMIDNGVHSIMRVEYPATGKDGRPKTGERLIPFVGVYVKAVEQAAGRVVVDWEADY</sequence>
<comment type="function">
    <text evidence="1">An accessory protein needed during the final step in the assembly of 30S ribosomal subunit, possibly for assembly of the head region. Essential for efficient processing of 16S rRNA. May be needed both before and after RbfA during the maturation of 16S rRNA. It has affinity for free ribosomal 30S subunits but not for 70S ribosomes.</text>
</comment>
<comment type="subunit">
    <text evidence="1">Binds ribosomal protein uS19.</text>
</comment>
<comment type="subcellular location">
    <subcellularLocation>
        <location evidence="1">Cytoplasm</location>
    </subcellularLocation>
</comment>
<comment type="domain">
    <text evidence="1">The PRC barrel domain binds ribosomal protein uS19.</text>
</comment>
<comment type="similarity">
    <text evidence="1">Belongs to the RimM family.</text>
</comment>
<feature type="chain" id="PRO_0000244116" description="Ribosome maturation factor RimM">
    <location>
        <begin position="1"/>
        <end position="229"/>
    </location>
</feature>
<feature type="domain" description="PRC barrel" evidence="1">
    <location>
        <begin position="148"/>
        <end position="229"/>
    </location>
</feature>
<dbReference type="EMBL" id="CP000124">
    <property type="protein sequence ID" value="ABA49718.1"/>
    <property type="molecule type" value="Genomic_DNA"/>
</dbReference>
<dbReference type="RefSeq" id="WP_004527496.1">
    <property type="nucleotide sequence ID" value="NC_007434.1"/>
</dbReference>
<dbReference type="SMR" id="Q3JQ07"/>
<dbReference type="EnsemblBacteria" id="ABA49718">
    <property type="protein sequence ID" value="ABA49718"/>
    <property type="gene ID" value="BURPS1710b_2967"/>
</dbReference>
<dbReference type="KEGG" id="bpm:BURPS1710b_2967"/>
<dbReference type="HOGENOM" id="CLU_077636_1_0_4"/>
<dbReference type="Proteomes" id="UP000002700">
    <property type="component" value="Chromosome I"/>
</dbReference>
<dbReference type="GO" id="GO:0005737">
    <property type="term" value="C:cytoplasm"/>
    <property type="evidence" value="ECO:0007669"/>
    <property type="project" value="UniProtKB-SubCell"/>
</dbReference>
<dbReference type="GO" id="GO:0005840">
    <property type="term" value="C:ribosome"/>
    <property type="evidence" value="ECO:0007669"/>
    <property type="project" value="InterPro"/>
</dbReference>
<dbReference type="GO" id="GO:0043022">
    <property type="term" value="F:ribosome binding"/>
    <property type="evidence" value="ECO:0007669"/>
    <property type="project" value="InterPro"/>
</dbReference>
<dbReference type="GO" id="GO:0042274">
    <property type="term" value="P:ribosomal small subunit biogenesis"/>
    <property type="evidence" value="ECO:0007669"/>
    <property type="project" value="UniProtKB-UniRule"/>
</dbReference>
<dbReference type="GO" id="GO:0006364">
    <property type="term" value="P:rRNA processing"/>
    <property type="evidence" value="ECO:0007669"/>
    <property type="project" value="UniProtKB-UniRule"/>
</dbReference>
<dbReference type="Gene3D" id="2.30.30.240">
    <property type="entry name" value="PRC-barrel domain"/>
    <property type="match status" value="1"/>
</dbReference>
<dbReference type="Gene3D" id="2.40.30.60">
    <property type="entry name" value="RimM"/>
    <property type="match status" value="1"/>
</dbReference>
<dbReference type="HAMAP" id="MF_00014">
    <property type="entry name" value="Ribosome_mat_RimM"/>
    <property type="match status" value="1"/>
</dbReference>
<dbReference type="InterPro" id="IPR011033">
    <property type="entry name" value="PRC_barrel-like_sf"/>
</dbReference>
<dbReference type="InterPro" id="IPR056792">
    <property type="entry name" value="PRC_RimM"/>
</dbReference>
<dbReference type="InterPro" id="IPR011961">
    <property type="entry name" value="RimM"/>
</dbReference>
<dbReference type="InterPro" id="IPR002676">
    <property type="entry name" value="RimM_N"/>
</dbReference>
<dbReference type="InterPro" id="IPR036976">
    <property type="entry name" value="RimM_N_sf"/>
</dbReference>
<dbReference type="InterPro" id="IPR009000">
    <property type="entry name" value="Transl_B-barrel_sf"/>
</dbReference>
<dbReference type="NCBIfam" id="TIGR02273">
    <property type="entry name" value="16S_RimM"/>
    <property type="match status" value="1"/>
</dbReference>
<dbReference type="PANTHER" id="PTHR33692">
    <property type="entry name" value="RIBOSOME MATURATION FACTOR RIMM"/>
    <property type="match status" value="1"/>
</dbReference>
<dbReference type="PANTHER" id="PTHR33692:SF1">
    <property type="entry name" value="RIBOSOME MATURATION FACTOR RIMM"/>
    <property type="match status" value="1"/>
</dbReference>
<dbReference type="Pfam" id="PF24986">
    <property type="entry name" value="PRC_RimM"/>
    <property type="match status" value="1"/>
</dbReference>
<dbReference type="Pfam" id="PF01782">
    <property type="entry name" value="RimM"/>
    <property type="match status" value="1"/>
</dbReference>
<dbReference type="SUPFAM" id="SSF50346">
    <property type="entry name" value="PRC-barrel domain"/>
    <property type="match status" value="1"/>
</dbReference>
<dbReference type="SUPFAM" id="SSF50447">
    <property type="entry name" value="Translation proteins"/>
    <property type="match status" value="1"/>
</dbReference>
<proteinExistence type="inferred from homology"/>
<gene>
    <name evidence="1" type="primary">rimM</name>
    <name type="ordered locus">BURPS1710b_2967</name>
</gene>
<name>RIMM_BURP1</name>
<keyword id="KW-0143">Chaperone</keyword>
<keyword id="KW-0963">Cytoplasm</keyword>
<keyword id="KW-0690">Ribosome biogenesis</keyword>
<keyword id="KW-0698">rRNA processing</keyword>